<protein>
    <recommendedName>
        <fullName evidence="1">Carbamoyl phosphate synthase small chain</fullName>
        <ecNumber evidence="1">6.3.5.5</ecNumber>
    </recommendedName>
    <alternativeName>
        <fullName evidence="1">Carbamoyl phosphate synthetase glutamine chain</fullName>
    </alternativeName>
</protein>
<evidence type="ECO:0000255" key="1">
    <source>
        <dbReference type="HAMAP-Rule" id="MF_01209"/>
    </source>
</evidence>
<accession>Q2YM22</accession>
<feature type="chain" id="PRO_1000138853" description="Carbamoyl phosphate synthase small chain">
    <location>
        <begin position="1"/>
        <end position="407"/>
    </location>
</feature>
<feature type="domain" description="Glutamine amidotransferase type-1" evidence="1">
    <location>
        <begin position="209"/>
        <end position="397"/>
    </location>
</feature>
<feature type="region of interest" description="CPSase" evidence="1">
    <location>
        <begin position="1"/>
        <end position="205"/>
    </location>
</feature>
<feature type="active site" description="Nucleophile" evidence="1">
    <location>
        <position position="286"/>
    </location>
</feature>
<feature type="active site" evidence="1">
    <location>
        <position position="370"/>
    </location>
</feature>
<feature type="active site" evidence="1">
    <location>
        <position position="372"/>
    </location>
</feature>
<feature type="binding site" evidence="1">
    <location>
        <position position="60"/>
    </location>
    <ligand>
        <name>L-glutamine</name>
        <dbReference type="ChEBI" id="CHEBI:58359"/>
    </ligand>
</feature>
<feature type="binding site" evidence="1">
    <location>
        <position position="257"/>
    </location>
    <ligand>
        <name>L-glutamine</name>
        <dbReference type="ChEBI" id="CHEBI:58359"/>
    </ligand>
</feature>
<feature type="binding site" evidence="1">
    <location>
        <position position="259"/>
    </location>
    <ligand>
        <name>L-glutamine</name>
        <dbReference type="ChEBI" id="CHEBI:58359"/>
    </ligand>
</feature>
<feature type="binding site" evidence="1">
    <location>
        <position position="287"/>
    </location>
    <ligand>
        <name>L-glutamine</name>
        <dbReference type="ChEBI" id="CHEBI:58359"/>
    </ligand>
</feature>
<feature type="binding site" evidence="1">
    <location>
        <position position="290"/>
    </location>
    <ligand>
        <name>L-glutamine</name>
        <dbReference type="ChEBI" id="CHEBI:58359"/>
    </ligand>
</feature>
<feature type="binding site" evidence="1">
    <location>
        <position position="328"/>
    </location>
    <ligand>
        <name>L-glutamine</name>
        <dbReference type="ChEBI" id="CHEBI:58359"/>
    </ligand>
</feature>
<feature type="binding site" evidence="1">
    <location>
        <position position="330"/>
    </location>
    <ligand>
        <name>L-glutamine</name>
        <dbReference type="ChEBI" id="CHEBI:58359"/>
    </ligand>
</feature>
<feature type="binding site" evidence="1">
    <location>
        <position position="331"/>
    </location>
    <ligand>
        <name>L-glutamine</name>
        <dbReference type="ChEBI" id="CHEBI:58359"/>
    </ligand>
</feature>
<gene>
    <name evidence="1" type="primary">carA</name>
    <name type="ordered locus">BAB1_1502</name>
</gene>
<dbReference type="EC" id="6.3.5.5" evidence="1"/>
<dbReference type="EMBL" id="AM040264">
    <property type="protein sequence ID" value="CAJ11458.1"/>
    <property type="molecule type" value="Genomic_DNA"/>
</dbReference>
<dbReference type="RefSeq" id="WP_002964590.1">
    <property type="nucleotide sequence ID" value="NZ_KN046823.1"/>
</dbReference>
<dbReference type="SMR" id="Q2YM22"/>
<dbReference type="STRING" id="359391.BAB1_1502"/>
<dbReference type="MEROPS" id="C26.954"/>
<dbReference type="GeneID" id="93016227"/>
<dbReference type="KEGG" id="bmf:BAB1_1502"/>
<dbReference type="PATRIC" id="fig|359391.11.peg.951"/>
<dbReference type="HOGENOM" id="CLU_035901_2_2_5"/>
<dbReference type="PhylomeDB" id="Q2YM22"/>
<dbReference type="UniPathway" id="UPA00068">
    <property type="reaction ID" value="UER00171"/>
</dbReference>
<dbReference type="UniPathway" id="UPA00070">
    <property type="reaction ID" value="UER00115"/>
</dbReference>
<dbReference type="Proteomes" id="UP000002719">
    <property type="component" value="Chromosome I"/>
</dbReference>
<dbReference type="GO" id="GO:0005524">
    <property type="term" value="F:ATP binding"/>
    <property type="evidence" value="ECO:0007669"/>
    <property type="project" value="UniProtKB-UniRule"/>
</dbReference>
<dbReference type="GO" id="GO:0004088">
    <property type="term" value="F:carbamoyl-phosphate synthase (glutamine-hydrolyzing) activity"/>
    <property type="evidence" value="ECO:0007669"/>
    <property type="project" value="UniProtKB-UniRule"/>
</dbReference>
<dbReference type="GO" id="GO:0004359">
    <property type="term" value="F:glutaminase activity"/>
    <property type="evidence" value="ECO:0007669"/>
    <property type="project" value="RHEA"/>
</dbReference>
<dbReference type="GO" id="GO:0006207">
    <property type="term" value="P:'de novo' pyrimidine nucleobase biosynthetic process"/>
    <property type="evidence" value="ECO:0007669"/>
    <property type="project" value="InterPro"/>
</dbReference>
<dbReference type="GO" id="GO:0044205">
    <property type="term" value="P:'de novo' UMP biosynthetic process"/>
    <property type="evidence" value="ECO:0007669"/>
    <property type="project" value="UniProtKB-UniRule"/>
</dbReference>
<dbReference type="GO" id="GO:0006541">
    <property type="term" value="P:glutamine metabolic process"/>
    <property type="evidence" value="ECO:0007669"/>
    <property type="project" value="InterPro"/>
</dbReference>
<dbReference type="GO" id="GO:0006526">
    <property type="term" value="P:L-arginine biosynthetic process"/>
    <property type="evidence" value="ECO:0007669"/>
    <property type="project" value="UniProtKB-UniRule"/>
</dbReference>
<dbReference type="CDD" id="cd01744">
    <property type="entry name" value="GATase1_CPSase"/>
    <property type="match status" value="1"/>
</dbReference>
<dbReference type="FunFam" id="3.50.30.20:FF:000001">
    <property type="entry name" value="Carbamoyl-phosphate synthase small chain"/>
    <property type="match status" value="1"/>
</dbReference>
<dbReference type="Gene3D" id="3.40.50.880">
    <property type="match status" value="1"/>
</dbReference>
<dbReference type="Gene3D" id="3.50.30.20">
    <property type="entry name" value="Carbamoyl-phosphate synthase small subunit, N-terminal domain"/>
    <property type="match status" value="1"/>
</dbReference>
<dbReference type="HAMAP" id="MF_01209">
    <property type="entry name" value="CPSase_S_chain"/>
    <property type="match status" value="1"/>
</dbReference>
<dbReference type="InterPro" id="IPR050472">
    <property type="entry name" value="Anth_synth/Amidotransfase"/>
</dbReference>
<dbReference type="InterPro" id="IPR006274">
    <property type="entry name" value="CarbamoylP_synth_ssu"/>
</dbReference>
<dbReference type="InterPro" id="IPR002474">
    <property type="entry name" value="CarbamoylP_synth_ssu_N"/>
</dbReference>
<dbReference type="InterPro" id="IPR036480">
    <property type="entry name" value="CarbP_synth_ssu_N_sf"/>
</dbReference>
<dbReference type="InterPro" id="IPR029062">
    <property type="entry name" value="Class_I_gatase-like"/>
</dbReference>
<dbReference type="InterPro" id="IPR035686">
    <property type="entry name" value="CPSase_GATase1"/>
</dbReference>
<dbReference type="InterPro" id="IPR017926">
    <property type="entry name" value="GATASE"/>
</dbReference>
<dbReference type="NCBIfam" id="TIGR01368">
    <property type="entry name" value="CPSaseIIsmall"/>
    <property type="match status" value="1"/>
</dbReference>
<dbReference type="NCBIfam" id="NF009475">
    <property type="entry name" value="PRK12838.1"/>
    <property type="match status" value="1"/>
</dbReference>
<dbReference type="PANTHER" id="PTHR43418:SF7">
    <property type="entry name" value="CARBAMOYL-PHOSPHATE SYNTHASE SMALL CHAIN"/>
    <property type="match status" value="1"/>
</dbReference>
<dbReference type="PANTHER" id="PTHR43418">
    <property type="entry name" value="MULTIFUNCTIONAL TRYPTOPHAN BIOSYNTHESIS PROTEIN-RELATED"/>
    <property type="match status" value="1"/>
</dbReference>
<dbReference type="Pfam" id="PF00988">
    <property type="entry name" value="CPSase_sm_chain"/>
    <property type="match status" value="1"/>
</dbReference>
<dbReference type="Pfam" id="PF00117">
    <property type="entry name" value="GATase"/>
    <property type="match status" value="1"/>
</dbReference>
<dbReference type="PRINTS" id="PR00097">
    <property type="entry name" value="ANTSNTHASEII"/>
</dbReference>
<dbReference type="PRINTS" id="PR00099">
    <property type="entry name" value="CPSGATASE"/>
</dbReference>
<dbReference type="PRINTS" id="PR00096">
    <property type="entry name" value="GATASE"/>
</dbReference>
<dbReference type="SMART" id="SM01097">
    <property type="entry name" value="CPSase_sm_chain"/>
    <property type="match status" value="1"/>
</dbReference>
<dbReference type="SUPFAM" id="SSF52021">
    <property type="entry name" value="Carbamoyl phosphate synthetase, small subunit N-terminal domain"/>
    <property type="match status" value="1"/>
</dbReference>
<dbReference type="SUPFAM" id="SSF52317">
    <property type="entry name" value="Class I glutamine amidotransferase-like"/>
    <property type="match status" value="1"/>
</dbReference>
<dbReference type="PROSITE" id="PS51273">
    <property type="entry name" value="GATASE_TYPE_1"/>
    <property type="match status" value="1"/>
</dbReference>
<organism>
    <name type="scientific">Brucella abortus (strain 2308)</name>
    <dbReference type="NCBI Taxonomy" id="359391"/>
    <lineage>
        <taxon>Bacteria</taxon>
        <taxon>Pseudomonadati</taxon>
        <taxon>Pseudomonadota</taxon>
        <taxon>Alphaproteobacteria</taxon>
        <taxon>Hyphomicrobiales</taxon>
        <taxon>Brucellaceae</taxon>
        <taxon>Brucella/Ochrobactrum group</taxon>
        <taxon>Brucella</taxon>
    </lineage>
</organism>
<sequence length="407" mass="43536">MTETTPKTAPWTVQKRTAVLVLADGTVIEGKGLGATGAVEAEVVFNTALTGYEEILTDPSYAGQIVTFTFPHIGNVGANAEDIEDLTPANRHGAVGAIFKADITAPSNFRAAKDLDSWLKHRGIIALAGIDTRALTALIRERGAQNAVIAHDPNGNFDLDALKARAANWCGLENLDLAKDVTIGQSLVWKELPWTLQDGYGEQDAPQYHVVALDFGVKRNILRLLTGLGAKVTVLPATATAEDVLAHNPDGVFLSNGPGDPAATGEYAVPTIGKLVETGIPLFGICLGHQMLALALGGRTEKMHQGHHGANHPVKDYTTGKVEIVSMNHGFAVDSDSLPENVEETHVSLFDGTNCGLRVVGKPVFSVQHHPEASPGPQDSHYLFRRFINLIRERKGQAPLPEREQAA</sequence>
<reference key="1">
    <citation type="journal article" date="2005" name="Infect. Immun.">
        <title>Whole-genome analyses of speciation events in pathogenic Brucellae.</title>
        <authorList>
            <person name="Chain P.S."/>
            <person name="Comerci D.J."/>
            <person name="Tolmasky M.E."/>
            <person name="Larimer F.W."/>
            <person name="Malfatti S.A."/>
            <person name="Vergez L.M."/>
            <person name="Aguero F."/>
            <person name="Land M.L."/>
            <person name="Ugalde R.A."/>
            <person name="Garcia E."/>
        </authorList>
    </citation>
    <scope>NUCLEOTIDE SEQUENCE [LARGE SCALE GENOMIC DNA]</scope>
    <source>
        <strain>2308</strain>
    </source>
</reference>
<name>CARA_BRUA2</name>
<comment type="function">
    <text evidence="1">Small subunit of the glutamine-dependent carbamoyl phosphate synthetase (CPSase). CPSase catalyzes the formation of carbamoyl phosphate from the ammonia moiety of glutamine, carbonate, and phosphate donated by ATP, constituting the first step of 2 biosynthetic pathways, one leading to arginine and/or urea and the other to pyrimidine nucleotides. The small subunit (glutamine amidotransferase) binds and cleaves glutamine to supply the large subunit with the substrate ammonia.</text>
</comment>
<comment type="catalytic activity">
    <reaction evidence="1">
        <text>hydrogencarbonate + L-glutamine + 2 ATP + H2O = carbamoyl phosphate + L-glutamate + 2 ADP + phosphate + 2 H(+)</text>
        <dbReference type="Rhea" id="RHEA:18633"/>
        <dbReference type="ChEBI" id="CHEBI:15377"/>
        <dbReference type="ChEBI" id="CHEBI:15378"/>
        <dbReference type="ChEBI" id="CHEBI:17544"/>
        <dbReference type="ChEBI" id="CHEBI:29985"/>
        <dbReference type="ChEBI" id="CHEBI:30616"/>
        <dbReference type="ChEBI" id="CHEBI:43474"/>
        <dbReference type="ChEBI" id="CHEBI:58228"/>
        <dbReference type="ChEBI" id="CHEBI:58359"/>
        <dbReference type="ChEBI" id="CHEBI:456216"/>
        <dbReference type="EC" id="6.3.5.5"/>
    </reaction>
</comment>
<comment type="catalytic activity">
    <molecule>Carbamoyl phosphate synthase small chain</molecule>
    <reaction evidence="1">
        <text>L-glutamine + H2O = L-glutamate + NH4(+)</text>
        <dbReference type="Rhea" id="RHEA:15889"/>
        <dbReference type="ChEBI" id="CHEBI:15377"/>
        <dbReference type="ChEBI" id="CHEBI:28938"/>
        <dbReference type="ChEBI" id="CHEBI:29985"/>
        <dbReference type="ChEBI" id="CHEBI:58359"/>
    </reaction>
</comment>
<comment type="pathway">
    <text evidence="1">Amino-acid biosynthesis; L-arginine biosynthesis; carbamoyl phosphate from bicarbonate: step 1/1.</text>
</comment>
<comment type="pathway">
    <text evidence="1">Pyrimidine metabolism; UMP biosynthesis via de novo pathway; (S)-dihydroorotate from bicarbonate: step 1/3.</text>
</comment>
<comment type="subunit">
    <text evidence="1">Composed of two chains; the small (or glutamine) chain promotes the hydrolysis of glutamine to ammonia, which is used by the large (or ammonia) chain to synthesize carbamoyl phosphate. Tetramer of heterodimers (alpha,beta)4.</text>
</comment>
<comment type="similarity">
    <text evidence="1">Belongs to the CarA family.</text>
</comment>
<keyword id="KW-0028">Amino-acid biosynthesis</keyword>
<keyword id="KW-0055">Arginine biosynthesis</keyword>
<keyword id="KW-0067">ATP-binding</keyword>
<keyword id="KW-0315">Glutamine amidotransferase</keyword>
<keyword id="KW-0436">Ligase</keyword>
<keyword id="KW-0547">Nucleotide-binding</keyword>
<keyword id="KW-0665">Pyrimidine biosynthesis</keyword>
<keyword id="KW-1185">Reference proteome</keyword>
<proteinExistence type="inferred from homology"/>